<proteinExistence type="evidence at protein level"/>
<organism>
    <name type="scientific">Rattus norvegicus</name>
    <name type="common">Rat</name>
    <dbReference type="NCBI Taxonomy" id="10116"/>
    <lineage>
        <taxon>Eukaryota</taxon>
        <taxon>Metazoa</taxon>
        <taxon>Chordata</taxon>
        <taxon>Craniata</taxon>
        <taxon>Vertebrata</taxon>
        <taxon>Euteleostomi</taxon>
        <taxon>Mammalia</taxon>
        <taxon>Eutheria</taxon>
        <taxon>Euarchontoglires</taxon>
        <taxon>Glires</taxon>
        <taxon>Rodentia</taxon>
        <taxon>Myomorpha</taxon>
        <taxon>Muroidea</taxon>
        <taxon>Muridae</taxon>
        <taxon>Murinae</taxon>
        <taxon>Rattus</taxon>
    </lineage>
</organism>
<comment type="function">
    <text evidence="1 2 5 6">A cytochrome P450 monooxygenase with a key role in vitamin D catabolism and calcium homeostasis. Via C24-oxidation pathway, catalyzes the inactivation of both the vitamin D precursor calcidiol (25-hydroxyvitamin D(3)) and the active hormone calcitriol (1-alpha,25-dihydroxyvitamin D(3)) (PubMed:10231362, PubMed:16617161, PubMed:2026586). With initial hydroxylation at C-24 (via C24-oxidation pathway), performs a sequential 6-step oxidation of calcitriol leading to the formation of the biliary metabolite calcitroic acid (PubMed:10231362, PubMed:16617161). Hydroxylates at C-24 or C-25 other vitamin D active metabolites, such as CYP11A1-derived secosteroids 20S-hydroxycholecalciferol and 20S,23-dihydroxycholecalciferol (PubMed:25727742). Mechanistically, uses molecular oxygen inserting one oxygen atom into a substrate, and reducing the second into a water molecule, with two electrons provided by NADPH via FDXR/adrenodoxin reductase and FDX1/adrenodoxin (PubMed:2026586).</text>
</comment>
<comment type="catalytic activity">
    <reaction evidence="1 2 5">
        <text>calcitriol + 2 reduced [adrenodoxin] + O2 + 2 H(+) = calcitetrol + 2 oxidized [adrenodoxin] + H2O</text>
        <dbReference type="Rhea" id="RHEA:24964"/>
        <dbReference type="Rhea" id="RHEA-COMP:9998"/>
        <dbReference type="Rhea" id="RHEA-COMP:9999"/>
        <dbReference type="ChEBI" id="CHEBI:15377"/>
        <dbReference type="ChEBI" id="CHEBI:15378"/>
        <dbReference type="ChEBI" id="CHEBI:15379"/>
        <dbReference type="ChEBI" id="CHEBI:17823"/>
        <dbReference type="ChEBI" id="CHEBI:33737"/>
        <dbReference type="ChEBI" id="CHEBI:33738"/>
        <dbReference type="ChEBI" id="CHEBI:47799"/>
        <dbReference type="EC" id="1.14.15.16"/>
    </reaction>
    <physiologicalReaction direction="left-to-right" evidence="10">
        <dbReference type="Rhea" id="RHEA:24965"/>
    </physiologicalReaction>
</comment>
<comment type="catalytic activity">
    <reaction evidence="1 2">
        <text>calcitetrol + 2 reduced [adrenodoxin] + O2 + 2 H(+) = (1S)-1,25-dihydroxy-24-oxocalciol + 2 oxidized [adrenodoxin] + 2 H2O</text>
        <dbReference type="Rhea" id="RHEA:24972"/>
        <dbReference type="Rhea" id="RHEA-COMP:9998"/>
        <dbReference type="Rhea" id="RHEA-COMP:9999"/>
        <dbReference type="ChEBI" id="CHEBI:15377"/>
        <dbReference type="ChEBI" id="CHEBI:15378"/>
        <dbReference type="ChEBI" id="CHEBI:15379"/>
        <dbReference type="ChEBI" id="CHEBI:33737"/>
        <dbReference type="ChEBI" id="CHEBI:33738"/>
        <dbReference type="ChEBI" id="CHEBI:47799"/>
        <dbReference type="ChEBI" id="CHEBI:47812"/>
        <dbReference type="EC" id="1.14.15.16"/>
    </reaction>
    <physiologicalReaction direction="left-to-right" evidence="9">
        <dbReference type="Rhea" id="RHEA:24973"/>
    </physiologicalReaction>
</comment>
<comment type="catalytic activity">
    <reaction evidence="1 2">
        <text>(1S)-1,25-dihydroxy-24-oxocalciol + 2 reduced [adrenodoxin] + O2 + 2 H(+) = (1S)-1,23,25-trihydroxy-24-oxocalciol + 2 oxidized [adrenodoxin] + H2O</text>
        <dbReference type="Rhea" id="RHEA:24976"/>
        <dbReference type="Rhea" id="RHEA-COMP:9998"/>
        <dbReference type="Rhea" id="RHEA-COMP:9999"/>
        <dbReference type="ChEBI" id="CHEBI:15377"/>
        <dbReference type="ChEBI" id="CHEBI:15378"/>
        <dbReference type="ChEBI" id="CHEBI:15379"/>
        <dbReference type="ChEBI" id="CHEBI:33737"/>
        <dbReference type="ChEBI" id="CHEBI:33738"/>
        <dbReference type="ChEBI" id="CHEBI:47812"/>
        <dbReference type="ChEBI" id="CHEBI:47813"/>
    </reaction>
    <physiologicalReaction direction="left-to-right" evidence="9">
        <dbReference type="Rhea" id="RHEA:24977"/>
    </physiologicalReaction>
</comment>
<comment type="catalytic activity">
    <reaction evidence="1">
        <text>(1S)-1,23-dihydroxy-24,25,26,27-tetranorcalciol + 2 reduced [adrenodoxin] + O2 + 2 H(+) = (1S)-1-hydroxy-23-oxo-24,25,26,27-tetranorcalciol + 2 oxidized [adrenodoxin] + 2 H2O</text>
        <dbReference type="Rhea" id="RHEA:24984"/>
        <dbReference type="Rhea" id="RHEA-COMP:9998"/>
        <dbReference type="Rhea" id="RHEA-COMP:9999"/>
        <dbReference type="ChEBI" id="CHEBI:15377"/>
        <dbReference type="ChEBI" id="CHEBI:15378"/>
        <dbReference type="ChEBI" id="CHEBI:15379"/>
        <dbReference type="ChEBI" id="CHEBI:33737"/>
        <dbReference type="ChEBI" id="CHEBI:33738"/>
        <dbReference type="ChEBI" id="CHEBI:47818"/>
        <dbReference type="ChEBI" id="CHEBI:47820"/>
    </reaction>
    <physiologicalReaction direction="left-to-right" evidence="8">
        <dbReference type="Rhea" id="RHEA:24985"/>
    </physiologicalReaction>
</comment>
<comment type="catalytic activity">
    <reaction evidence="1">
        <text>(1S)-1-hydroxy-23-oxo-24,25,26,27-tetranorcalciol + 2 reduced [adrenodoxin] + O2 + H(+) = calcitroate + 2 oxidized [adrenodoxin] + H2O</text>
        <dbReference type="Rhea" id="RHEA:24988"/>
        <dbReference type="Rhea" id="RHEA-COMP:9998"/>
        <dbReference type="Rhea" id="RHEA-COMP:9999"/>
        <dbReference type="ChEBI" id="CHEBI:15377"/>
        <dbReference type="ChEBI" id="CHEBI:15378"/>
        <dbReference type="ChEBI" id="CHEBI:15379"/>
        <dbReference type="ChEBI" id="CHEBI:33737"/>
        <dbReference type="ChEBI" id="CHEBI:33738"/>
        <dbReference type="ChEBI" id="CHEBI:47820"/>
        <dbReference type="ChEBI" id="CHEBI:58715"/>
    </reaction>
    <physiologicalReaction direction="left-to-right" evidence="8">
        <dbReference type="Rhea" id="RHEA:24989"/>
    </physiologicalReaction>
</comment>
<comment type="catalytic activity">
    <reaction evidence="1 5">
        <text>calcidiol + 2 reduced [adrenodoxin] + O2 + 2 H(+) = secalciferol + 2 oxidized [adrenodoxin] + H2O</text>
        <dbReference type="Rhea" id="RHEA:24968"/>
        <dbReference type="Rhea" id="RHEA-COMP:9998"/>
        <dbReference type="Rhea" id="RHEA-COMP:9999"/>
        <dbReference type="ChEBI" id="CHEBI:15377"/>
        <dbReference type="ChEBI" id="CHEBI:15378"/>
        <dbReference type="ChEBI" id="CHEBI:15379"/>
        <dbReference type="ChEBI" id="CHEBI:17933"/>
        <dbReference type="ChEBI" id="CHEBI:28818"/>
        <dbReference type="ChEBI" id="CHEBI:33737"/>
        <dbReference type="ChEBI" id="CHEBI:33738"/>
        <dbReference type="EC" id="1.14.15.16"/>
    </reaction>
    <physiologicalReaction direction="left-to-right" evidence="10">
        <dbReference type="Rhea" id="RHEA:24969"/>
    </physiologicalReaction>
</comment>
<comment type="catalytic activity">
    <reaction evidence="1">
        <text>secalciferol + 2 reduced [adrenodoxin] + O2 + 2 H(+) = 25-hydroxy-24-oxocalciol + 2 oxidized [adrenodoxin] + 2 H2O</text>
        <dbReference type="Rhea" id="RHEA:49196"/>
        <dbReference type="Rhea" id="RHEA-COMP:9998"/>
        <dbReference type="Rhea" id="RHEA-COMP:9999"/>
        <dbReference type="ChEBI" id="CHEBI:15377"/>
        <dbReference type="ChEBI" id="CHEBI:15378"/>
        <dbReference type="ChEBI" id="CHEBI:15379"/>
        <dbReference type="ChEBI" id="CHEBI:28818"/>
        <dbReference type="ChEBI" id="CHEBI:33737"/>
        <dbReference type="ChEBI" id="CHEBI:33738"/>
        <dbReference type="ChEBI" id="CHEBI:47805"/>
    </reaction>
    <physiologicalReaction direction="left-to-right" evidence="8">
        <dbReference type="Rhea" id="RHEA:49197"/>
    </physiologicalReaction>
</comment>
<comment type="catalytic activity">
    <reaction evidence="1">
        <text>25-hydroxy-24-oxocalciol + 2 reduced [adrenodoxin] + O2 + 2 H(+) = 23S,25-dihydroxy-24-oxocholecalciferol + 2 oxidized [adrenodoxin] + H2O</text>
        <dbReference type="Rhea" id="RHEA:49268"/>
        <dbReference type="Rhea" id="RHEA-COMP:9998"/>
        <dbReference type="Rhea" id="RHEA-COMP:9999"/>
        <dbReference type="ChEBI" id="CHEBI:15377"/>
        <dbReference type="ChEBI" id="CHEBI:15378"/>
        <dbReference type="ChEBI" id="CHEBI:15379"/>
        <dbReference type="ChEBI" id="CHEBI:33737"/>
        <dbReference type="ChEBI" id="CHEBI:33738"/>
        <dbReference type="ChEBI" id="CHEBI:47805"/>
        <dbReference type="ChEBI" id="CHEBI:90980"/>
    </reaction>
    <physiologicalReaction direction="left-to-right" evidence="8">
        <dbReference type="Rhea" id="RHEA:49269"/>
    </physiologicalReaction>
</comment>
<comment type="catalytic activity">
    <reaction evidence="6">
        <text>20S,23-dihydroxycholecalciferol + 2 reduced [adrenodoxin] + O2 + 2 H(+) = 20S,23,25-trihydroxycholecalciferol + 2 oxidized [adrenodoxin] + H2O</text>
        <dbReference type="Rhea" id="RHEA:49396"/>
        <dbReference type="Rhea" id="RHEA-COMP:9998"/>
        <dbReference type="Rhea" id="RHEA-COMP:9999"/>
        <dbReference type="ChEBI" id="CHEBI:15377"/>
        <dbReference type="ChEBI" id="CHEBI:15378"/>
        <dbReference type="ChEBI" id="CHEBI:15379"/>
        <dbReference type="ChEBI" id="CHEBI:33737"/>
        <dbReference type="ChEBI" id="CHEBI:33738"/>
        <dbReference type="ChEBI" id="CHEBI:91306"/>
        <dbReference type="ChEBI" id="CHEBI:91308"/>
    </reaction>
    <physiologicalReaction direction="left-to-right" evidence="11">
        <dbReference type="Rhea" id="RHEA:49397"/>
    </physiologicalReaction>
</comment>
<comment type="catalytic activity">
    <reaction evidence="6">
        <text>20S,23-dihydroxycholecalciferol + 2 reduced [adrenodoxin] + O2 + 2 H(+) = 20S,23,24-trihydroxycholecalciferol + 2 oxidized [adrenodoxin] + H2O</text>
        <dbReference type="Rhea" id="RHEA:49392"/>
        <dbReference type="Rhea" id="RHEA-COMP:9998"/>
        <dbReference type="Rhea" id="RHEA-COMP:9999"/>
        <dbReference type="ChEBI" id="CHEBI:15377"/>
        <dbReference type="ChEBI" id="CHEBI:15378"/>
        <dbReference type="ChEBI" id="CHEBI:15379"/>
        <dbReference type="ChEBI" id="CHEBI:33737"/>
        <dbReference type="ChEBI" id="CHEBI:33738"/>
        <dbReference type="ChEBI" id="CHEBI:91306"/>
        <dbReference type="ChEBI" id="CHEBI:91307"/>
    </reaction>
    <physiologicalReaction direction="left-to-right" evidence="11">
        <dbReference type="Rhea" id="RHEA:49393"/>
    </physiologicalReaction>
</comment>
<comment type="catalytic activity">
    <reaction evidence="6">
        <text>20S-hydroxycholecalciferol + 2 reduced [adrenodoxin] + O2 + 2 H(+) = 20S,25-dihydroxycholecalciferol + 2 oxidized [adrenodoxin] + H2O</text>
        <dbReference type="Rhea" id="RHEA:49212"/>
        <dbReference type="Rhea" id="RHEA-COMP:9998"/>
        <dbReference type="Rhea" id="RHEA-COMP:9999"/>
        <dbReference type="ChEBI" id="CHEBI:15377"/>
        <dbReference type="ChEBI" id="CHEBI:15378"/>
        <dbReference type="ChEBI" id="CHEBI:15379"/>
        <dbReference type="ChEBI" id="CHEBI:33737"/>
        <dbReference type="ChEBI" id="CHEBI:33738"/>
        <dbReference type="ChEBI" id="CHEBI:90983"/>
        <dbReference type="ChEBI" id="CHEBI:90984"/>
    </reaction>
    <physiologicalReaction direction="left-to-right" evidence="11">
        <dbReference type="Rhea" id="RHEA:49213"/>
    </physiologicalReaction>
</comment>
<comment type="catalytic activity">
    <reaction evidence="6">
        <text>20S-hydroxycholecalciferol + 2 reduced [adrenodoxin] + O2 + 2 H(+) = 20S,24S-dihydroxycholecalciferol + 2 oxidized [adrenodoxin] + H2O</text>
        <dbReference type="Rhea" id="RHEA:49208"/>
        <dbReference type="Rhea" id="RHEA-COMP:9998"/>
        <dbReference type="Rhea" id="RHEA-COMP:9999"/>
        <dbReference type="ChEBI" id="CHEBI:15377"/>
        <dbReference type="ChEBI" id="CHEBI:15378"/>
        <dbReference type="ChEBI" id="CHEBI:15379"/>
        <dbReference type="ChEBI" id="CHEBI:33737"/>
        <dbReference type="ChEBI" id="CHEBI:33738"/>
        <dbReference type="ChEBI" id="CHEBI:90983"/>
        <dbReference type="ChEBI" id="CHEBI:90986"/>
    </reaction>
    <physiologicalReaction direction="left-to-right" evidence="11">
        <dbReference type="Rhea" id="RHEA:49209"/>
    </physiologicalReaction>
</comment>
<comment type="catalytic activity">
    <reaction evidence="6">
        <text>20S-hydroxycholecalciferol + 2 reduced [adrenodoxin] + O2 + 2 H(+) = 20S,24R-dihydroxycholecalciferol + 2 oxidized [adrenodoxin] + H2O</text>
        <dbReference type="Rhea" id="RHEA:49204"/>
        <dbReference type="Rhea" id="RHEA-COMP:9998"/>
        <dbReference type="Rhea" id="RHEA-COMP:9999"/>
        <dbReference type="ChEBI" id="CHEBI:15377"/>
        <dbReference type="ChEBI" id="CHEBI:15378"/>
        <dbReference type="ChEBI" id="CHEBI:15379"/>
        <dbReference type="ChEBI" id="CHEBI:33737"/>
        <dbReference type="ChEBI" id="CHEBI:33738"/>
        <dbReference type="ChEBI" id="CHEBI:90983"/>
        <dbReference type="ChEBI" id="CHEBI:90985"/>
    </reaction>
    <physiologicalReaction direction="left-to-right" evidence="11">
        <dbReference type="Rhea" id="RHEA:49205"/>
    </physiologicalReaction>
</comment>
<comment type="cofactor">
    <cofactor evidence="4">
        <name>heme</name>
        <dbReference type="ChEBI" id="CHEBI:30413"/>
    </cofactor>
</comment>
<comment type="biophysicochemical properties">
    <kinetics>
        <KM evidence="5">2.8 uM for calcidiol</KM>
        <KM evidence="2">0.19 uM for calcitriol</KM>
    </kinetics>
    <phDependence>
        <text evidence="5">Optimum pH is 7.7.</text>
    </phDependence>
</comment>
<comment type="subcellular location">
    <subcellularLocation>
        <location evidence="10">Mitochondrion</location>
    </subcellularLocation>
</comment>
<comment type="similarity">
    <text evidence="7">Belongs to the cytochrome P450 family.</text>
</comment>
<keyword id="KW-0002">3D-structure</keyword>
<keyword id="KW-0903">Direct protein sequencing</keyword>
<keyword id="KW-0349">Heme</keyword>
<keyword id="KW-0408">Iron</keyword>
<keyword id="KW-0443">Lipid metabolism</keyword>
<keyword id="KW-0479">Metal-binding</keyword>
<keyword id="KW-0496">Mitochondrion</keyword>
<keyword id="KW-0503">Monooxygenase</keyword>
<keyword id="KW-0560">Oxidoreductase</keyword>
<keyword id="KW-1185">Reference proteome</keyword>
<keyword id="KW-0809">Transit peptide</keyword>
<protein>
    <recommendedName>
        <fullName>1,25-dihydroxyvitamin D(3) 24-hydroxylase, mitochondrial</fullName>
        <shortName>24-OHase</shortName>
        <shortName>Vitamin D(3) 24-hydroxylase</shortName>
        <ecNumber evidence="5">1.14.15.16</ecNumber>
    </recommendedName>
    <alternativeName>
        <fullName>Cytochrome P450 24A1</fullName>
    </alternativeName>
    <alternativeName>
        <fullName>Cytochrome P450-CC24</fullName>
    </alternativeName>
</protein>
<sequence>MSCPIDKRRTLIAFLRRLRDLGQPPRSVTSKASASRAPKEVPLCPLMTDGETRNVTSLPGPTNWPLLGSLLEIFWKGGLKKQHDTLAEYHKKYGQIFRMKLGSFDSVHLGSPSLLEALYRTESAHPQRLEIKPWKAYRDHRNEAYGLMILEGQEWQRVRSAFQKKLMKPVEIMKLDKKINEVLADFLERMDELCDERGRIPDLYSELNKWSFESICLVLYEKRFGLLQKETEEEALTFITAIKTMMSTFGKMMVTPVELHKRLNTKVWQAHTLAWDTIFKSVKPCIDNRLQRYSQQPGADFLCDIYQQDHLSKKELYAAVTELQLAAVETTANSLMWILYNLSRNPQAQRRLLQEVQSVLPDNQTPRAEDLRNMPYLKACLKESMRLTPSVPFTTRTLDKPTVLGEYALPKGTVLTLNTQVLGSSEDNFEDSHKFRPERWLQKEKKINPFAHLPFGIGKRMCIGRRLAELQLHLALCWIIQKYDIVATDNEPVEMLHLGILVPSRELPIAFRPR</sequence>
<dbReference type="EC" id="1.14.15.16" evidence="5"/>
<dbReference type="EMBL" id="X59506">
    <property type="protein sequence ID" value="CAA42093.1"/>
    <property type="molecule type" value="mRNA"/>
</dbReference>
<dbReference type="EMBL" id="L04618">
    <property type="protein sequence ID" value="AAA42340.1"/>
    <property type="molecule type" value="Genomic_DNA"/>
</dbReference>
<dbReference type="EMBL" id="L04608">
    <property type="protein sequence ID" value="AAA42340.1"/>
    <property type="status" value="JOINED"/>
    <property type="molecule type" value="Genomic_DNA"/>
</dbReference>
<dbReference type="EMBL" id="L04609">
    <property type="protein sequence ID" value="AAA42340.1"/>
    <property type="status" value="JOINED"/>
    <property type="molecule type" value="Genomic_DNA"/>
</dbReference>
<dbReference type="EMBL" id="L04610">
    <property type="protein sequence ID" value="AAA42340.1"/>
    <property type="status" value="JOINED"/>
    <property type="molecule type" value="Genomic_DNA"/>
</dbReference>
<dbReference type="EMBL" id="L04611">
    <property type="protein sequence ID" value="AAA42340.1"/>
    <property type="status" value="JOINED"/>
    <property type="molecule type" value="Genomic_DNA"/>
</dbReference>
<dbReference type="EMBL" id="L04612">
    <property type="protein sequence ID" value="AAA42340.1"/>
    <property type="status" value="JOINED"/>
    <property type="molecule type" value="Genomic_DNA"/>
</dbReference>
<dbReference type="EMBL" id="L04613">
    <property type="protein sequence ID" value="AAA42340.1"/>
    <property type="status" value="JOINED"/>
    <property type="molecule type" value="Genomic_DNA"/>
</dbReference>
<dbReference type="EMBL" id="L04614">
    <property type="protein sequence ID" value="AAA42340.1"/>
    <property type="status" value="JOINED"/>
    <property type="molecule type" value="Genomic_DNA"/>
</dbReference>
<dbReference type="EMBL" id="L04615">
    <property type="protein sequence ID" value="AAA42340.1"/>
    <property type="status" value="JOINED"/>
    <property type="molecule type" value="Genomic_DNA"/>
</dbReference>
<dbReference type="EMBL" id="L04616">
    <property type="protein sequence ID" value="AAA42340.1"/>
    <property type="status" value="JOINED"/>
    <property type="molecule type" value="Genomic_DNA"/>
</dbReference>
<dbReference type="EMBL" id="L04617">
    <property type="protein sequence ID" value="AAA42340.1"/>
    <property type="status" value="JOINED"/>
    <property type="molecule type" value="Genomic_DNA"/>
</dbReference>
<dbReference type="EMBL" id="BC100059">
    <property type="protein sequence ID" value="AAI00060.1"/>
    <property type="molecule type" value="mRNA"/>
</dbReference>
<dbReference type="EMBL" id="Z28351">
    <property type="protein sequence ID" value="CAA82206.1"/>
    <property type="molecule type" value="Genomic_DNA"/>
</dbReference>
<dbReference type="PIR" id="A45228">
    <property type="entry name" value="A45228"/>
</dbReference>
<dbReference type="RefSeq" id="NP_963966.1">
    <property type="nucleotide sequence ID" value="NM_201635.3"/>
</dbReference>
<dbReference type="PDB" id="3K9V">
    <property type="method" value="X-ray"/>
    <property type="resolution" value="2.50 A"/>
    <property type="chains" value="A/B=34-514"/>
</dbReference>
<dbReference type="PDB" id="3K9Y">
    <property type="method" value="X-ray"/>
    <property type="resolution" value="2.80 A"/>
    <property type="chains" value="A/B=34-514"/>
</dbReference>
<dbReference type="PDBsum" id="3K9V"/>
<dbReference type="PDBsum" id="3K9Y"/>
<dbReference type="SMR" id="Q09128"/>
<dbReference type="FunCoup" id="Q09128">
    <property type="interactions" value="70"/>
</dbReference>
<dbReference type="STRING" id="10116.ENSRNOP00000043298"/>
<dbReference type="BindingDB" id="Q09128"/>
<dbReference type="ChEMBL" id="CHEMBL3748"/>
<dbReference type="DrugCentral" id="Q09128"/>
<dbReference type="SwissLipids" id="SLP:000001482"/>
<dbReference type="PhosphoSitePlus" id="Q09128"/>
<dbReference type="PaxDb" id="10116-ENSRNOP00000043298"/>
<dbReference type="Ensembl" id="ENSRNOT00000046011.3">
    <property type="protein sequence ID" value="ENSRNOP00000043298.2"/>
    <property type="gene ID" value="ENSRNOG00000013062.6"/>
</dbReference>
<dbReference type="GeneID" id="25279"/>
<dbReference type="KEGG" id="rno:25279"/>
<dbReference type="AGR" id="RGD:2462"/>
<dbReference type="CTD" id="1591"/>
<dbReference type="RGD" id="2462">
    <property type="gene designation" value="Cyp24a1"/>
</dbReference>
<dbReference type="eggNOG" id="KOG0159">
    <property type="taxonomic scope" value="Eukaryota"/>
</dbReference>
<dbReference type="GeneTree" id="ENSGT00950000182905"/>
<dbReference type="HOGENOM" id="CLU_001570_28_1_1"/>
<dbReference type="InParanoid" id="Q09128"/>
<dbReference type="OMA" id="VLMINTH"/>
<dbReference type="OrthoDB" id="23256at9989"/>
<dbReference type="PhylomeDB" id="Q09128"/>
<dbReference type="TreeFam" id="TF105094"/>
<dbReference type="BioCyc" id="MetaCyc:MONOMER-14357"/>
<dbReference type="BRENDA" id="1.14.15.16">
    <property type="organism ID" value="5301"/>
</dbReference>
<dbReference type="Reactome" id="R-RNO-196791">
    <property type="pathway name" value="Vitamin D (calciferol) metabolism"/>
</dbReference>
<dbReference type="Reactome" id="R-RNO-211916">
    <property type="pathway name" value="Vitamins"/>
</dbReference>
<dbReference type="SABIO-RK" id="Q09128"/>
<dbReference type="EvolutionaryTrace" id="Q09128"/>
<dbReference type="PRO" id="PR:Q09128"/>
<dbReference type="Proteomes" id="UP000002494">
    <property type="component" value="Chromosome 3"/>
</dbReference>
<dbReference type="Bgee" id="ENSRNOG00000013062">
    <property type="expression patterns" value="Expressed in kidney and 2 other cell types or tissues"/>
</dbReference>
<dbReference type="GO" id="GO:0005739">
    <property type="term" value="C:mitochondrion"/>
    <property type="evidence" value="ECO:0007669"/>
    <property type="project" value="UniProtKB-SubCell"/>
</dbReference>
<dbReference type="GO" id="GO:0062181">
    <property type="term" value="F:1-alpha,25-dihydroxyvitamin D3 23-hydroxylase activity"/>
    <property type="evidence" value="ECO:0000266"/>
    <property type="project" value="RGD"/>
</dbReference>
<dbReference type="GO" id="GO:0030342">
    <property type="term" value="F:1-alpha,25-dihydroxyvitamin D3 24-hydroxylase activity"/>
    <property type="evidence" value="ECO:0000314"/>
    <property type="project" value="UniProtKB"/>
</dbReference>
<dbReference type="GO" id="GO:0062180">
    <property type="term" value="F:25-hydroxycholecalciferol-23-hydroxylase activity"/>
    <property type="evidence" value="ECO:0000266"/>
    <property type="project" value="RGD"/>
</dbReference>
<dbReference type="GO" id="GO:0008403">
    <property type="term" value="F:25-hydroxycholecalciferol-24-hydroxylase activity"/>
    <property type="evidence" value="ECO:0000314"/>
    <property type="project" value="UniProtKB"/>
</dbReference>
<dbReference type="GO" id="GO:0020037">
    <property type="term" value="F:heme binding"/>
    <property type="evidence" value="ECO:0007669"/>
    <property type="project" value="InterPro"/>
</dbReference>
<dbReference type="GO" id="GO:0005506">
    <property type="term" value="F:iron ion binding"/>
    <property type="evidence" value="ECO:0007669"/>
    <property type="project" value="InterPro"/>
</dbReference>
<dbReference type="GO" id="GO:0070576">
    <property type="term" value="F:vitamin D 24-hydroxylase activity"/>
    <property type="evidence" value="ECO:0000314"/>
    <property type="project" value="UniProtKB"/>
</dbReference>
<dbReference type="GO" id="GO:0030343">
    <property type="term" value="F:vitamin D3 25-hydroxylase activity"/>
    <property type="evidence" value="ECO:0000314"/>
    <property type="project" value="UniProtKB"/>
</dbReference>
<dbReference type="GO" id="GO:0071305">
    <property type="term" value="P:cellular response to vitamin D"/>
    <property type="evidence" value="ECO:0000270"/>
    <property type="project" value="RGD"/>
</dbReference>
<dbReference type="GO" id="GO:0001649">
    <property type="term" value="P:osteoblast differentiation"/>
    <property type="evidence" value="ECO:0000266"/>
    <property type="project" value="RGD"/>
</dbReference>
<dbReference type="GO" id="GO:0033280">
    <property type="term" value="P:response to vitamin D"/>
    <property type="evidence" value="ECO:0000266"/>
    <property type="project" value="RGD"/>
</dbReference>
<dbReference type="GO" id="GO:0042369">
    <property type="term" value="P:vitamin D catabolic process"/>
    <property type="evidence" value="ECO:0000314"/>
    <property type="project" value="UniProtKB"/>
</dbReference>
<dbReference type="GO" id="GO:0042359">
    <property type="term" value="P:vitamin D metabolic process"/>
    <property type="evidence" value="ECO:0000314"/>
    <property type="project" value="RGD"/>
</dbReference>
<dbReference type="CDD" id="cd20645">
    <property type="entry name" value="CYP24A1"/>
    <property type="match status" value="1"/>
</dbReference>
<dbReference type="FunFam" id="1.10.630.10:FF:000006">
    <property type="entry name" value="Cytochrome P450 302a1, mitochondrial"/>
    <property type="match status" value="1"/>
</dbReference>
<dbReference type="Gene3D" id="1.10.630.10">
    <property type="entry name" value="Cytochrome P450"/>
    <property type="match status" value="1"/>
</dbReference>
<dbReference type="InterPro" id="IPR050479">
    <property type="entry name" value="CYP11_CYP27_families"/>
</dbReference>
<dbReference type="InterPro" id="IPR001128">
    <property type="entry name" value="Cyt_P450"/>
</dbReference>
<dbReference type="InterPro" id="IPR017972">
    <property type="entry name" value="Cyt_P450_CS"/>
</dbReference>
<dbReference type="InterPro" id="IPR002949">
    <property type="entry name" value="Cyt_P450_E_CYP24A_mit"/>
</dbReference>
<dbReference type="InterPro" id="IPR036396">
    <property type="entry name" value="Cyt_P450_sf"/>
</dbReference>
<dbReference type="PANTHER" id="PTHR24279">
    <property type="entry name" value="CYTOCHROME P450"/>
    <property type="match status" value="1"/>
</dbReference>
<dbReference type="PANTHER" id="PTHR24279:SF125">
    <property type="entry name" value="CYTOCHROME P450 FAMILY 24 SUBFAMILY A MEMBER 1"/>
    <property type="match status" value="1"/>
</dbReference>
<dbReference type="Pfam" id="PF00067">
    <property type="entry name" value="p450"/>
    <property type="match status" value="1"/>
</dbReference>
<dbReference type="PRINTS" id="PR01238">
    <property type="entry name" value="MITP450CC24"/>
</dbReference>
<dbReference type="PRINTS" id="PR00385">
    <property type="entry name" value="P450"/>
</dbReference>
<dbReference type="SUPFAM" id="SSF48264">
    <property type="entry name" value="Cytochrome P450"/>
    <property type="match status" value="1"/>
</dbReference>
<dbReference type="PROSITE" id="PS00086">
    <property type="entry name" value="CYTOCHROME_P450"/>
    <property type="match status" value="1"/>
</dbReference>
<accession>Q09128</accession>
<accession>Q498V4</accession>
<accession>Q63685</accession>
<feature type="transit peptide" description="Mitochondrion" evidence="3 5">
    <location>
        <begin position="1"/>
        <end position="35"/>
    </location>
</feature>
<feature type="chain" id="PRO_0000003617" description="1,25-dihydroxyvitamin D(3) 24-hydroxylase, mitochondrial">
    <location>
        <begin position="36"/>
        <end position="514"/>
    </location>
</feature>
<feature type="binding site" description="axial binding residue" evidence="12 13">
    <location>
        <position position="462"/>
    </location>
    <ligand>
        <name>heme</name>
        <dbReference type="ChEBI" id="CHEBI:30413"/>
    </ligand>
    <ligandPart>
        <name>Fe</name>
        <dbReference type="ChEBI" id="CHEBI:18248"/>
    </ligandPart>
</feature>
<feature type="mutagenesis site" description="Increases the C23:C24 hydroxylation ratio from 0.01 to 0.12." evidence="2">
    <original>T</original>
    <variation>F</variation>
    <location>
        <position position="416"/>
    </location>
</feature>
<feature type="mutagenesis site" description="Increases the C23:C24 hydroxylation ratio from 0.01 to 0.19." evidence="2">
    <original>T</original>
    <variation>I</variation>
    <location>
        <position position="416"/>
    </location>
</feature>
<feature type="mutagenesis site" description="Increases the C23:C24 hydroxylation ratio from 0.01 to 0.08." evidence="2">
    <original>T</original>
    <variation>M</variation>
    <location>
        <position position="416"/>
    </location>
</feature>
<feature type="mutagenesis site" description="Increases the C23:C24 hydroxylation ratio from 0.01 to 0.16." evidence="2">
    <original>T</original>
    <variation>V</variation>
    <location>
        <position position="416"/>
    </location>
</feature>
<feature type="mutagenesis site" description="Increases the C23:C24 hydroxylation ratio from 0.01 to 0.15." evidence="2">
    <original>I</original>
    <variation>A</variation>
    <location>
        <position position="500"/>
    </location>
</feature>
<feature type="mutagenesis site" description="Increases the C23:C24 hydroxylation ratio from 0.01 to 0.16." evidence="2">
    <original>I</original>
    <variation>T</variation>
    <variation>L</variation>
    <location>
        <position position="500"/>
    </location>
</feature>
<feature type="mutagenesis site" description="Increases the C23:C24 hydroxylation ratio from 0.01 to 0.13." evidence="2">
    <original>I</original>
    <variation>V</variation>
    <location>
        <position position="500"/>
    </location>
</feature>
<feature type="helix" evidence="14">
    <location>
        <begin position="55"/>
        <end position="57"/>
    </location>
</feature>
<feature type="turn" evidence="14">
    <location>
        <begin position="65"/>
        <end position="67"/>
    </location>
</feature>
<feature type="helix" evidence="14">
    <location>
        <begin position="70"/>
        <end position="75"/>
    </location>
</feature>
<feature type="helix" evidence="14">
    <location>
        <begin position="79"/>
        <end position="81"/>
    </location>
</feature>
<feature type="helix" evidence="14">
    <location>
        <begin position="82"/>
        <end position="93"/>
    </location>
</feature>
<feature type="strand" evidence="14">
    <location>
        <begin position="95"/>
        <end position="101"/>
    </location>
</feature>
<feature type="strand" evidence="14">
    <location>
        <begin position="104"/>
        <end position="109"/>
    </location>
</feature>
<feature type="helix" evidence="14">
    <location>
        <begin position="112"/>
        <end position="120"/>
    </location>
</feature>
<feature type="helix" evidence="14">
    <location>
        <begin position="132"/>
        <end position="141"/>
    </location>
</feature>
<feature type="turn" evidence="14">
    <location>
        <begin position="147"/>
        <end position="149"/>
    </location>
</feature>
<feature type="helix" evidence="14">
    <location>
        <begin position="152"/>
        <end position="166"/>
    </location>
</feature>
<feature type="helix" evidence="14">
    <location>
        <begin position="169"/>
        <end position="172"/>
    </location>
</feature>
<feature type="helix" evidence="14">
    <location>
        <begin position="173"/>
        <end position="175"/>
    </location>
</feature>
<feature type="helix" evidence="14">
    <location>
        <begin position="176"/>
        <end position="193"/>
    </location>
</feature>
<feature type="strand" evidence="15">
    <location>
        <begin position="196"/>
        <end position="198"/>
    </location>
</feature>
<feature type="helix" evidence="14">
    <location>
        <begin position="203"/>
        <end position="220"/>
    </location>
</feature>
<feature type="strand" evidence="14">
    <location>
        <begin position="226"/>
        <end position="228"/>
    </location>
</feature>
<feature type="helix" evidence="14">
    <location>
        <begin position="236"/>
        <end position="246"/>
    </location>
</feature>
<feature type="helix" evidence="14">
    <location>
        <begin position="249"/>
        <end position="252"/>
    </location>
</feature>
<feature type="strand" evidence="14">
    <location>
        <begin position="253"/>
        <end position="255"/>
    </location>
</feature>
<feature type="helix" evidence="14">
    <location>
        <begin position="257"/>
        <end position="263"/>
    </location>
</feature>
<feature type="helix" evidence="14">
    <location>
        <begin position="266"/>
        <end position="292"/>
    </location>
</feature>
<feature type="turn" evidence="14">
    <location>
        <begin position="293"/>
        <end position="295"/>
    </location>
</feature>
<feature type="helix" evidence="14">
    <location>
        <begin position="301"/>
        <end position="308"/>
    </location>
</feature>
<feature type="helix" evidence="14">
    <location>
        <begin position="313"/>
        <end position="343"/>
    </location>
</feature>
<feature type="helix" evidence="14">
    <location>
        <begin position="346"/>
        <end position="359"/>
    </location>
</feature>
<feature type="helix" evidence="14">
    <location>
        <begin position="368"/>
        <end position="373"/>
    </location>
</feature>
<feature type="helix" evidence="14">
    <location>
        <begin position="375"/>
        <end position="387"/>
    </location>
</feature>
<feature type="strand" evidence="14">
    <location>
        <begin position="393"/>
        <end position="397"/>
    </location>
</feature>
<feature type="strand" evidence="14">
    <location>
        <begin position="402"/>
        <end position="404"/>
    </location>
</feature>
<feature type="strand" evidence="14">
    <location>
        <begin position="407"/>
        <end position="409"/>
    </location>
</feature>
<feature type="strand" evidence="14">
    <location>
        <begin position="414"/>
        <end position="418"/>
    </location>
</feature>
<feature type="helix" evidence="14">
    <location>
        <begin position="421"/>
        <end position="424"/>
    </location>
</feature>
<feature type="turn" evidence="14">
    <location>
        <begin position="426"/>
        <end position="428"/>
    </location>
</feature>
<feature type="strand" evidence="15">
    <location>
        <begin position="432"/>
        <end position="434"/>
    </location>
</feature>
<feature type="helix" evidence="14">
    <location>
        <begin position="437"/>
        <end position="440"/>
    </location>
</feature>
<feature type="helix" evidence="14">
    <location>
        <begin position="449"/>
        <end position="451"/>
    </location>
</feature>
<feature type="helix" evidence="14">
    <location>
        <begin position="465"/>
        <end position="482"/>
    </location>
</feature>
<feature type="strand" evidence="14">
    <location>
        <begin position="483"/>
        <end position="488"/>
    </location>
</feature>
<feature type="strand" evidence="14">
    <location>
        <begin position="495"/>
        <end position="506"/>
    </location>
</feature>
<feature type="strand" evidence="14">
    <location>
        <begin position="509"/>
        <end position="513"/>
    </location>
</feature>
<reference key="1">
    <citation type="journal article" date="1991" name="FEBS Lett.">
        <title>Cloning and expression of cDNA encoding 25-hydroxyvitamin D3 24-hydroxylase.</title>
        <authorList>
            <person name="Ohyama Y."/>
            <person name="Noshiro M."/>
            <person name="Okuda K."/>
        </authorList>
    </citation>
    <scope>NUCLEOTIDE SEQUENCE [MRNA]</scope>
    <scope>PROTEIN SEQUENCE OF 36-43</scope>
    <source>
        <tissue>Kidney</tissue>
    </source>
</reference>
<reference key="2">
    <citation type="journal article" date="1993" name="Biochemistry">
        <title>Structural characterization of the gene encoding rat 25-hydroxyvitamin D3 24-hydroxylase.</title>
        <authorList>
            <person name="Ohyama Y."/>
            <person name="Noshiro M."/>
            <person name="Eggertsen G."/>
            <person name="Gotoh O."/>
            <person name="Kato Y."/>
            <person name="Bjoerkhem I."/>
            <person name="Okuda K."/>
        </authorList>
    </citation>
    <scope>NUCLEOTIDE SEQUENCE [GENOMIC DNA]</scope>
</reference>
<reference key="3">
    <citation type="journal article" date="2004" name="Genome Res.">
        <title>The status, quality, and expansion of the NIH full-length cDNA project: the Mammalian Gene Collection (MGC).</title>
        <authorList>
            <consortium name="The MGC Project Team"/>
        </authorList>
    </citation>
    <scope>NUCLEOTIDE SEQUENCE [LARGE SCALE MRNA]</scope>
    <source>
        <tissue>Kidney</tissue>
    </source>
</reference>
<reference key="4">
    <citation type="journal article" date="1994" name="Nucleic Acids Res.">
        <title>Identification of a vitamin D responsive element in the promoter of the rat cytochrome P450(24) gene.</title>
        <authorList>
            <person name="Hahn C.N."/>
            <person name="Kerry D.M."/>
            <person name="Omdahl J.L."/>
            <person name="May B.K."/>
        </authorList>
    </citation>
    <scope>NUCLEOTIDE SEQUENCE [GENOMIC DNA] OF 1-86</scope>
</reference>
<reference key="5">
    <citation type="journal article" date="1991" name="J. Biol. Chem.">
        <title>Isolation and characterization of a cytochrome P-450 from rat kidney mitochondria that catalyzes the 24-hydroxylation of 25-hydroxyvitamin D3.</title>
        <authorList>
            <person name="Ohyama Y."/>
            <person name="Okuda K."/>
        </authorList>
    </citation>
    <scope>PROTEIN SEQUENCE OF 36-43</scope>
    <scope>FUNCTION</scope>
    <scope>CATALYTIC ACTIVITY</scope>
    <scope>SUBSTRATE SPECIFICITY</scope>
    <scope>BIOPHYSICOCHEMICAL PROPERTIES</scope>
    <scope>SUBCELLULAR LOCATION</scope>
</reference>
<reference key="6">
    <citation type="journal article" date="1999" name="Eur. J. Biochem.">
        <title>Metabolic studies using recombinant escherichia coli cells producing rat mitochondrial CYP24 CYP24 can convert 1alpha,25-dihydroxyvitamin D3 to calcitroic acid.</title>
        <authorList>
            <person name="Sakaki T."/>
            <person name="Sawada N."/>
            <person name="Nonaka Y."/>
            <person name="Ohyama Y."/>
            <person name="Inouye K."/>
        </authorList>
    </citation>
    <scope>FUNCTION</scope>
    <scope>CATALYTIC ACTIVITY</scope>
</reference>
<reference key="7">
    <citation type="journal article" date="2005" name="Front. Biosci.">
        <title>Metabolism of vitamin D3 by cytochromes P450.</title>
        <authorList>
            <person name="Sakaki T."/>
            <person name="Kagawa N."/>
            <person name="Yamamoto K."/>
            <person name="Inouye K."/>
        </authorList>
    </citation>
    <scope>SUBSTRATE SPECIFICITY</scope>
</reference>
<reference key="8">
    <citation type="journal article" date="2006" name="Mol. Pharmacol.">
        <title>Structure-function analysis of vitamin D 24-hydroxylase (CYP24A1) by site-directed mutagenesis: amino acid residues responsible for species-based difference of CYP24A1 between humans and rats.</title>
        <authorList>
            <person name="Hamamoto H."/>
            <person name="Kusudo T."/>
            <person name="Urushino N."/>
            <person name="Masuno H."/>
            <person name="Yamamoto K."/>
            <person name="Yamada S."/>
            <person name="Kamakura M."/>
            <person name="Ohta M."/>
            <person name="Inouye K."/>
            <person name="Sakaki T."/>
        </authorList>
    </citation>
    <scope>FUNCTION</scope>
    <scope>CATALYTIC ACTIVITY</scope>
    <scope>BIOPHYSICOCHEMICAL PROPERTIES</scope>
    <scope>MUTAGENESIS OF THR-416 AND ILE-500</scope>
</reference>
<reference key="9">
    <citation type="journal article" date="2015" name="J. Steroid Biochem. Mol. Biol.">
        <title>Metabolism of 20-hydroxyvitamin D3 and 20,23-dihydroxyvitamin D3 by rat and human CYP24A1.</title>
        <authorList>
            <person name="Tieu E.W."/>
            <person name="Li W."/>
            <person name="Chen J."/>
            <person name="Kim T.K."/>
            <person name="Ma D."/>
            <person name="Slominski A.T."/>
            <person name="Tuckey R.C."/>
        </authorList>
    </citation>
    <scope>FUNCTION</scope>
    <scope>CATALYTIC ACTIVITY</scope>
</reference>
<reference key="10">
    <citation type="journal article" date="2010" name="J. Mol. Biol.">
        <title>Crystal structure of CYP24A1, a mitochondrial cytochrome P450 involved in vitamin D metabolism.</title>
        <authorList>
            <person name="Annalora A.J."/>
            <person name="Goodin D.B."/>
            <person name="Hong W.X."/>
            <person name="Zhang Q."/>
            <person name="Johnson E.F."/>
            <person name="Stout C.D."/>
        </authorList>
    </citation>
    <scope>X-RAY CRYSTALLOGRAPHY (2.5 ANGSTROMS) OF 34-514 IN COMPLEX WITH HEME</scope>
    <scope>COFACTOR</scope>
</reference>
<name>CP24A_RAT</name>
<gene>
    <name type="primary">Cyp24a1</name>
    <name type="synonym">Cyp24</name>
</gene>
<evidence type="ECO:0000269" key="1">
    <source>
    </source>
</evidence>
<evidence type="ECO:0000269" key="2">
    <source>
    </source>
</evidence>
<evidence type="ECO:0000269" key="3">
    <source>
    </source>
</evidence>
<evidence type="ECO:0000269" key="4">
    <source>
    </source>
</evidence>
<evidence type="ECO:0000269" key="5">
    <source>
    </source>
</evidence>
<evidence type="ECO:0000269" key="6">
    <source>
    </source>
</evidence>
<evidence type="ECO:0000305" key="7"/>
<evidence type="ECO:0000305" key="8">
    <source>
    </source>
</evidence>
<evidence type="ECO:0000305" key="9">
    <source>
    </source>
</evidence>
<evidence type="ECO:0000305" key="10">
    <source>
    </source>
</evidence>
<evidence type="ECO:0000305" key="11">
    <source>
    </source>
</evidence>
<evidence type="ECO:0007744" key="12">
    <source>
        <dbReference type="PDB" id="3K9V"/>
    </source>
</evidence>
<evidence type="ECO:0007744" key="13">
    <source>
        <dbReference type="PDB" id="3K9Y"/>
    </source>
</evidence>
<evidence type="ECO:0007829" key="14">
    <source>
        <dbReference type="PDB" id="3K9V"/>
    </source>
</evidence>
<evidence type="ECO:0007829" key="15">
    <source>
        <dbReference type="PDB" id="3K9Y"/>
    </source>
</evidence>